<dbReference type="PIR" id="B90227">
    <property type="entry name" value="HBDGY"/>
</dbReference>
<dbReference type="SMR" id="P60525"/>
<dbReference type="GO" id="GO:0072562">
    <property type="term" value="C:blood microparticle"/>
    <property type="evidence" value="ECO:0007669"/>
    <property type="project" value="TreeGrafter"/>
</dbReference>
<dbReference type="GO" id="GO:0031838">
    <property type="term" value="C:haptoglobin-hemoglobin complex"/>
    <property type="evidence" value="ECO:0007669"/>
    <property type="project" value="TreeGrafter"/>
</dbReference>
<dbReference type="GO" id="GO:0005833">
    <property type="term" value="C:hemoglobin complex"/>
    <property type="evidence" value="ECO:0007669"/>
    <property type="project" value="InterPro"/>
</dbReference>
<dbReference type="GO" id="GO:0031720">
    <property type="term" value="F:haptoglobin binding"/>
    <property type="evidence" value="ECO:0007669"/>
    <property type="project" value="TreeGrafter"/>
</dbReference>
<dbReference type="GO" id="GO:0020037">
    <property type="term" value="F:heme binding"/>
    <property type="evidence" value="ECO:0007669"/>
    <property type="project" value="InterPro"/>
</dbReference>
<dbReference type="GO" id="GO:0031721">
    <property type="term" value="F:hemoglobin alpha binding"/>
    <property type="evidence" value="ECO:0007669"/>
    <property type="project" value="TreeGrafter"/>
</dbReference>
<dbReference type="GO" id="GO:0046872">
    <property type="term" value="F:metal ion binding"/>
    <property type="evidence" value="ECO:0007669"/>
    <property type="project" value="UniProtKB-KW"/>
</dbReference>
<dbReference type="GO" id="GO:0043177">
    <property type="term" value="F:organic acid binding"/>
    <property type="evidence" value="ECO:0007669"/>
    <property type="project" value="TreeGrafter"/>
</dbReference>
<dbReference type="GO" id="GO:0019825">
    <property type="term" value="F:oxygen binding"/>
    <property type="evidence" value="ECO:0007669"/>
    <property type="project" value="InterPro"/>
</dbReference>
<dbReference type="GO" id="GO:0005344">
    <property type="term" value="F:oxygen carrier activity"/>
    <property type="evidence" value="ECO:0007669"/>
    <property type="project" value="UniProtKB-KW"/>
</dbReference>
<dbReference type="GO" id="GO:0004601">
    <property type="term" value="F:peroxidase activity"/>
    <property type="evidence" value="ECO:0007669"/>
    <property type="project" value="TreeGrafter"/>
</dbReference>
<dbReference type="GO" id="GO:0042744">
    <property type="term" value="P:hydrogen peroxide catabolic process"/>
    <property type="evidence" value="ECO:0007669"/>
    <property type="project" value="TreeGrafter"/>
</dbReference>
<dbReference type="CDD" id="cd08925">
    <property type="entry name" value="Hb-beta-like"/>
    <property type="match status" value="1"/>
</dbReference>
<dbReference type="FunFam" id="1.10.490.10:FF:000001">
    <property type="entry name" value="Hemoglobin subunit beta"/>
    <property type="match status" value="1"/>
</dbReference>
<dbReference type="Gene3D" id="1.10.490.10">
    <property type="entry name" value="Globins"/>
    <property type="match status" value="1"/>
</dbReference>
<dbReference type="InterPro" id="IPR000971">
    <property type="entry name" value="Globin"/>
</dbReference>
<dbReference type="InterPro" id="IPR009050">
    <property type="entry name" value="Globin-like_sf"/>
</dbReference>
<dbReference type="InterPro" id="IPR012292">
    <property type="entry name" value="Globin/Proto"/>
</dbReference>
<dbReference type="InterPro" id="IPR002337">
    <property type="entry name" value="Hemoglobin_b"/>
</dbReference>
<dbReference type="InterPro" id="IPR050056">
    <property type="entry name" value="Hemoglobin_oxygen_transport"/>
</dbReference>
<dbReference type="PANTHER" id="PTHR11442">
    <property type="entry name" value="HEMOGLOBIN FAMILY MEMBER"/>
    <property type="match status" value="1"/>
</dbReference>
<dbReference type="PANTHER" id="PTHR11442:SF42">
    <property type="entry name" value="HEMOGLOBIN SUBUNIT BETA"/>
    <property type="match status" value="1"/>
</dbReference>
<dbReference type="Pfam" id="PF00042">
    <property type="entry name" value="Globin"/>
    <property type="match status" value="1"/>
</dbReference>
<dbReference type="PRINTS" id="PR00814">
    <property type="entry name" value="BETAHAEM"/>
</dbReference>
<dbReference type="SUPFAM" id="SSF46458">
    <property type="entry name" value="Globin-like"/>
    <property type="match status" value="1"/>
</dbReference>
<dbReference type="PROSITE" id="PS01033">
    <property type="entry name" value="GLOBIN"/>
    <property type="match status" value="1"/>
</dbReference>
<sequence>VHLTAEEKSLVSGLWGKVNVDEVGGEALGRLLIVYPWTQRFFDSFGDLSTPDAVMSNAKVKAHGKKVLNSFSDGLKNLDNLKGTFAKLSELHCDKLHVDPENFKLLGNVLVCVLAHHFGKEFTPQVQAAYQKVVAGVANALAHKYH</sequence>
<proteinExistence type="evidence at protein level"/>
<accession>P60525</accession>
<accession>P02056</accession>
<name>HBB_CANLA</name>
<feature type="chain" id="PRO_0000052908" description="Hemoglobin subunit beta">
    <location>
        <begin position="1"/>
        <end position="146"/>
    </location>
</feature>
<feature type="domain" description="Globin" evidence="3">
    <location>
        <begin position="2"/>
        <end position="146"/>
    </location>
</feature>
<feature type="binding site" description="distal binding residue">
    <location>
        <position position="63"/>
    </location>
    <ligand>
        <name>heme b</name>
        <dbReference type="ChEBI" id="CHEBI:60344"/>
    </ligand>
    <ligandPart>
        <name>Fe</name>
        <dbReference type="ChEBI" id="CHEBI:18248"/>
    </ligandPart>
</feature>
<feature type="binding site" description="proximal binding residue">
    <location>
        <position position="92"/>
    </location>
    <ligand>
        <name>heme b</name>
        <dbReference type="ChEBI" id="CHEBI:60344"/>
    </ligand>
    <ligandPart>
        <name>Fe</name>
        <dbReference type="ChEBI" id="CHEBI:18248"/>
    </ligandPart>
</feature>
<feature type="modified residue" description="N-acetylvaline" evidence="1">
    <location>
        <position position="1"/>
    </location>
</feature>
<feature type="modified residue" description="Phosphoserine" evidence="2">
    <location>
        <position position="44"/>
    </location>
</feature>
<feature type="modified residue" description="N6-acetyllysine" evidence="2">
    <location>
        <position position="59"/>
    </location>
</feature>
<feature type="modified residue" description="N6-acetyllysine" evidence="2">
    <location>
        <position position="82"/>
    </location>
</feature>
<feature type="modified residue" description="S-nitrosocysteine" evidence="2">
    <location>
        <position position="93"/>
    </location>
</feature>
<feature type="modified residue" description="N6-acetyllysine" evidence="2">
    <location>
        <position position="144"/>
    </location>
</feature>
<protein>
    <recommendedName>
        <fullName>Hemoglobin subunit beta</fullName>
    </recommendedName>
    <alternativeName>
        <fullName>Beta-globin</fullName>
    </alternativeName>
    <alternativeName>
        <fullName>Hemoglobin beta chain</fullName>
    </alternativeName>
</protein>
<organism>
    <name type="scientific">Canis latrans</name>
    <name type="common">Coyote</name>
    <dbReference type="NCBI Taxonomy" id="9614"/>
    <lineage>
        <taxon>Eukaryota</taxon>
        <taxon>Metazoa</taxon>
        <taxon>Chordata</taxon>
        <taxon>Craniata</taxon>
        <taxon>Vertebrata</taxon>
        <taxon>Euteleostomi</taxon>
        <taxon>Mammalia</taxon>
        <taxon>Eutheria</taxon>
        <taxon>Laurasiatheria</taxon>
        <taxon>Carnivora</taxon>
        <taxon>Caniformia</taxon>
        <taxon>Canidae</taxon>
        <taxon>Canis</taxon>
    </lineage>
</organism>
<evidence type="ECO:0000250" key="1">
    <source>
        <dbReference type="UniProtKB" id="P02086"/>
    </source>
</evidence>
<evidence type="ECO:0000250" key="2">
    <source>
        <dbReference type="UniProtKB" id="P68871"/>
    </source>
</evidence>
<evidence type="ECO:0000255" key="3">
    <source>
        <dbReference type="PROSITE-ProRule" id="PRU00238"/>
    </source>
</evidence>
<reference key="1">
    <citation type="journal article" date="1974" name="Biochem. Genet.">
        <title>The tryptic peptides of coyote (Canis latrans) hemoglobin.</title>
        <authorList>
            <person name="Runkel D."/>
            <person name="Dresler S.L."/>
            <person name="Brimhall B."/>
            <person name="Jones R.T."/>
        </authorList>
    </citation>
    <scope>PRELIMINARY PROTEIN SEQUENCE</scope>
</reference>
<gene>
    <name type="primary">HBB</name>
</gene>
<comment type="function">
    <text>Involved in oxygen transport from the lung to the various peripheral tissues.</text>
</comment>
<comment type="subunit">
    <text>Heterotetramer of two alpha chains and two beta chains.</text>
</comment>
<comment type="tissue specificity">
    <text>Red blood cells.</text>
</comment>
<comment type="similarity">
    <text evidence="3">Belongs to the globin family.</text>
</comment>
<keyword id="KW-0007">Acetylation</keyword>
<keyword id="KW-0903">Direct protein sequencing</keyword>
<keyword id="KW-0349">Heme</keyword>
<keyword id="KW-0408">Iron</keyword>
<keyword id="KW-0479">Metal-binding</keyword>
<keyword id="KW-0561">Oxygen transport</keyword>
<keyword id="KW-0597">Phosphoprotein</keyword>
<keyword id="KW-0702">S-nitrosylation</keyword>
<keyword id="KW-0813">Transport</keyword>